<feature type="peptide" id="PRO_0000405862" description="Cyclotide cter-K" evidence="2 3">
    <location>
        <begin position="1"/>
        <end position="29"/>
    </location>
</feature>
<feature type="disulfide bond" evidence="1 2">
    <location>
        <begin position="4"/>
        <end position="20"/>
    </location>
</feature>
<feature type="disulfide bond" evidence="1 2">
    <location>
        <begin position="8"/>
        <end position="22"/>
    </location>
</feature>
<feature type="disulfide bond" evidence="1 2">
    <location>
        <begin position="13"/>
        <end position="27"/>
    </location>
</feature>
<feature type="cross-link" description="Cyclopeptide (His-Asn)" evidence="4">
    <location>
        <begin position="1"/>
        <end position="29"/>
    </location>
</feature>
<feature type="unsure residue" description="I or L" evidence="3">
    <location>
        <position position="11"/>
    </location>
</feature>
<feature type="unsure residue" description="I or L" evidence="3">
    <location>
        <position position="14"/>
    </location>
</feature>
<reference evidence="5" key="1">
    <citation type="journal article" date="2011" name="ACS Chem. Biol.">
        <title>The discovery of cyclotides in the Fabaceae plant family provides new insights into the cyclization, evolution and distribution of circular proteins.</title>
        <authorList>
            <person name="Poth A.G."/>
            <person name="Colgrave M.L."/>
            <person name="Philip R."/>
            <person name="Kerenga B."/>
            <person name="Daly N.L."/>
            <person name="Anderson M."/>
            <person name="Craik D.J."/>
        </authorList>
    </citation>
    <scope>PROTEIN SEQUENCE</scope>
    <scope>DISULFIDE BONDS</scope>
    <scope>CYCLIZATION</scope>
    <scope>MASS SPECTROMETRY</scope>
    <source>
        <tissue evidence="3">Seed</tissue>
    </source>
</reference>
<accession>P86851</accession>
<organism>
    <name type="scientific">Clitoria ternatea</name>
    <name type="common">Butterfly pea</name>
    <dbReference type="NCBI Taxonomy" id="43366"/>
    <lineage>
        <taxon>Eukaryota</taxon>
        <taxon>Viridiplantae</taxon>
        <taxon>Streptophyta</taxon>
        <taxon>Embryophyta</taxon>
        <taxon>Tracheophyta</taxon>
        <taxon>Spermatophyta</taxon>
        <taxon>Magnoliopsida</taxon>
        <taxon>eudicotyledons</taxon>
        <taxon>Gunneridae</taxon>
        <taxon>Pentapetalae</taxon>
        <taxon>rosids</taxon>
        <taxon>fabids</taxon>
        <taxon>Fabales</taxon>
        <taxon>Fabaceae</taxon>
        <taxon>Papilionoideae</taxon>
        <taxon>50 kb inversion clade</taxon>
        <taxon>NPAAA clade</taxon>
        <taxon>indigoferoid/millettioid clade</taxon>
        <taxon>Phaseoleae</taxon>
        <taxon>Clitoria</taxon>
    </lineage>
</organism>
<keyword id="KW-0903">Direct protein sequencing</keyword>
<keyword id="KW-1015">Disulfide bond</keyword>
<keyword id="KW-0960">Knottin</keyword>
<keyword id="KW-0611">Plant defense</keyword>
<comment type="function">
    <text evidence="1 2">Probably participates in a plant defense mechanism.</text>
</comment>
<comment type="domain">
    <text evidence="5">The presence of a 'disulfide through disulfide knot' structurally defines this protein as a knottin.</text>
</comment>
<comment type="PTM">
    <text evidence="3">Contains 3 disulfide bonds.</text>
</comment>
<comment type="PTM">
    <text evidence="2 3">This is a cyclic peptide.</text>
</comment>
<comment type="mass spectrometry"/>
<comment type="similarity">
    <text evidence="2">Belongs to the cyclotide family. Bracelet subfamily.</text>
</comment>
<comment type="caution">
    <text evidence="5">This peptide is cyclic. The start position was chosen by similarity to cyclotide cter-A for which the DNA sequence is known.</text>
</comment>
<sequence>HEPCGESCVFIPCITTVVGCSCKNKVCYN</sequence>
<dbReference type="SMR" id="P86851"/>
<dbReference type="GO" id="GO:0006952">
    <property type="term" value="P:defense response"/>
    <property type="evidence" value="ECO:0007669"/>
    <property type="project" value="UniProtKB-KW"/>
</dbReference>
<dbReference type="InterPro" id="IPR005535">
    <property type="entry name" value="Cyclotide"/>
</dbReference>
<dbReference type="InterPro" id="IPR012323">
    <property type="entry name" value="Cyclotide_bracelet_CS"/>
</dbReference>
<dbReference type="InterPro" id="IPR036146">
    <property type="entry name" value="Cyclotide_sf"/>
</dbReference>
<dbReference type="Pfam" id="PF03784">
    <property type="entry name" value="Cyclotide"/>
    <property type="match status" value="1"/>
</dbReference>
<dbReference type="PIRSF" id="PIRSF037891">
    <property type="entry name" value="Cycloviolacin"/>
    <property type="match status" value="1"/>
</dbReference>
<dbReference type="SUPFAM" id="SSF57038">
    <property type="entry name" value="Cyclotides"/>
    <property type="match status" value="1"/>
</dbReference>
<dbReference type="PROSITE" id="PS51052">
    <property type="entry name" value="CYCLOTIDE"/>
    <property type="match status" value="1"/>
</dbReference>
<dbReference type="PROSITE" id="PS60008">
    <property type="entry name" value="CYCLOTIDE_BRACELET"/>
    <property type="match status" value="1"/>
</dbReference>
<proteinExistence type="evidence at protein level"/>
<name>CYCK_CLITE</name>
<evidence type="ECO:0000250" key="1">
    <source>
        <dbReference type="UniProtKB" id="P56254"/>
    </source>
</evidence>
<evidence type="ECO:0000255" key="2">
    <source>
        <dbReference type="PROSITE-ProRule" id="PRU00395"/>
    </source>
</evidence>
<evidence type="ECO:0000269" key="3">
    <source>
    </source>
</evidence>
<evidence type="ECO:0000303" key="4">
    <source>
    </source>
</evidence>
<evidence type="ECO:0000305" key="5"/>
<protein>
    <recommendedName>
        <fullName evidence="4">Cyclotide cter-K</fullName>
    </recommendedName>
</protein>